<keyword id="KW-0539">Nucleus</keyword>
<keyword id="KW-1185">Reference proteome</keyword>
<keyword id="KW-0677">Repeat</keyword>
<keyword id="KW-0690">Ribosome biogenesis</keyword>
<keyword id="KW-0698">rRNA processing</keyword>
<keyword id="KW-0853">WD repeat</keyword>
<comment type="function">
    <text evidence="1">Required for maturation of ribosomal RNAs and formation of the large ribosomal subunit.</text>
</comment>
<comment type="subcellular location">
    <subcellularLocation>
        <location evidence="1">Nucleus</location>
        <location evidence="1">Nucleolus</location>
    </subcellularLocation>
    <subcellularLocation>
        <location evidence="1">Nucleus</location>
        <location evidence="1">Nucleoplasm</location>
    </subcellularLocation>
</comment>
<comment type="similarity">
    <text evidence="1">Belongs to the WD repeat BOP1/ERB1 family.</text>
</comment>
<comment type="sequence caution" evidence="3">
    <conflict type="erroneous gene model prediction">
        <sequence resource="EMBL-CDS" id="BAC84089"/>
    </conflict>
</comment>
<reference key="1">
    <citation type="journal article" date="2005" name="Nature">
        <title>The map-based sequence of the rice genome.</title>
        <authorList>
            <consortium name="International rice genome sequencing project (IRGSP)"/>
        </authorList>
    </citation>
    <scope>NUCLEOTIDE SEQUENCE [LARGE SCALE GENOMIC DNA]</scope>
    <source>
        <strain>cv. Nipponbare</strain>
    </source>
</reference>
<reference key="2">
    <citation type="journal article" date="2008" name="Nucleic Acids Res.">
        <title>The rice annotation project database (RAP-DB): 2008 update.</title>
        <authorList>
            <consortium name="The rice annotation project (RAP)"/>
        </authorList>
    </citation>
    <scope>GENOME REANNOTATION</scope>
    <source>
        <strain>cv. Nipponbare</strain>
    </source>
</reference>
<reference key="3">
    <citation type="journal article" date="2013" name="Rice">
        <title>Improvement of the Oryza sativa Nipponbare reference genome using next generation sequence and optical map data.</title>
        <authorList>
            <person name="Kawahara Y."/>
            <person name="de la Bastide M."/>
            <person name="Hamilton J.P."/>
            <person name="Kanamori H."/>
            <person name="McCombie W.R."/>
            <person name="Ouyang S."/>
            <person name="Schwartz D.C."/>
            <person name="Tanaka T."/>
            <person name="Wu J."/>
            <person name="Zhou S."/>
            <person name="Childs K.L."/>
            <person name="Davidson R.M."/>
            <person name="Lin H."/>
            <person name="Quesada-Ocampo L."/>
            <person name="Vaillancourt B."/>
            <person name="Sakai H."/>
            <person name="Lee S.S."/>
            <person name="Kim J."/>
            <person name="Numa H."/>
            <person name="Itoh T."/>
            <person name="Buell C.R."/>
            <person name="Matsumoto T."/>
        </authorList>
    </citation>
    <scope>GENOME REANNOTATION</scope>
    <source>
        <strain>cv. Nipponbare</strain>
    </source>
</reference>
<reference key="4">
    <citation type="journal article" date="2005" name="PLoS Biol.">
        <title>The genomes of Oryza sativa: a history of duplications.</title>
        <authorList>
            <person name="Yu J."/>
            <person name="Wang J."/>
            <person name="Lin W."/>
            <person name="Li S."/>
            <person name="Li H."/>
            <person name="Zhou J."/>
            <person name="Ni P."/>
            <person name="Dong W."/>
            <person name="Hu S."/>
            <person name="Zeng C."/>
            <person name="Zhang J."/>
            <person name="Zhang Y."/>
            <person name="Li R."/>
            <person name="Xu Z."/>
            <person name="Li S."/>
            <person name="Li X."/>
            <person name="Zheng H."/>
            <person name="Cong L."/>
            <person name="Lin L."/>
            <person name="Yin J."/>
            <person name="Geng J."/>
            <person name="Li G."/>
            <person name="Shi J."/>
            <person name="Liu J."/>
            <person name="Lv H."/>
            <person name="Li J."/>
            <person name="Wang J."/>
            <person name="Deng Y."/>
            <person name="Ran L."/>
            <person name="Shi X."/>
            <person name="Wang X."/>
            <person name="Wu Q."/>
            <person name="Li C."/>
            <person name="Ren X."/>
            <person name="Wang J."/>
            <person name="Wang X."/>
            <person name="Li D."/>
            <person name="Liu D."/>
            <person name="Zhang X."/>
            <person name="Ji Z."/>
            <person name="Zhao W."/>
            <person name="Sun Y."/>
            <person name="Zhang Z."/>
            <person name="Bao J."/>
            <person name="Han Y."/>
            <person name="Dong L."/>
            <person name="Ji J."/>
            <person name="Chen P."/>
            <person name="Wu S."/>
            <person name="Liu J."/>
            <person name="Xiao Y."/>
            <person name="Bu D."/>
            <person name="Tan J."/>
            <person name="Yang L."/>
            <person name="Ye C."/>
            <person name="Zhang J."/>
            <person name="Xu J."/>
            <person name="Zhou Y."/>
            <person name="Yu Y."/>
            <person name="Zhang B."/>
            <person name="Zhuang S."/>
            <person name="Wei H."/>
            <person name="Liu B."/>
            <person name="Lei M."/>
            <person name="Yu H."/>
            <person name="Li Y."/>
            <person name="Xu H."/>
            <person name="Wei S."/>
            <person name="He X."/>
            <person name="Fang L."/>
            <person name="Zhang Z."/>
            <person name="Zhang Y."/>
            <person name="Huang X."/>
            <person name="Su Z."/>
            <person name="Tong W."/>
            <person name="Li J."/>
            <person name="Tong Z."/>
            <person name="Li S."/>
            <person name="Ye J."/>
            <person name="Wang L."/>
            <person name="Fang L."/>
            <person name="Lei T."/>
            <person name="Chen C.-S."/>
            <person name="Chen H.-C."/>
            <person name="Xu Z."/>
            <person name="Li H."/>
            <person name="Huang H."/>
            <person name="Zhang F."/>
            <person name="Xu H."/>
            <person name="Li N."/>
            <person name="Zhao C."/>
            <person name="Li S."/>
            <person name="Dong L."/>
            <person name="Huang Y."/>
            <person name="Li L."/>
            <person name="Xi Y."/>
            <person name="Qi Q."/>
            <person name="Li W."/>
            <person name="Zhang B."/>
            <person name="Hu W."/>
            <person name="Zhang Y."/>
            <person name="Tian X."/>
            <person name="Jiao Y."/>
            <person name="Liang X."/>
            <person name="Jin J."/>
            <person name="Gao L."/>
            <person name="Zheng W."/>
            <person name="Hao B."/>
            <person name="Liu S.-M."/>
            <person name="Wang W."/>
            <person name="Yuan L."/>
            <person name="Cao M."/>
            <person name="McDermott J."/>
            <person name="Samudrala R."/>
            <person name="Wang J."/>
            <person name="Wong G.K.-S."/>
            <person name="Yang H."/>
        </authorList>
    </citation>
    <scope>NUCLEOTIDE SEQUENCE [LARGE SCALE GENOMIC DNA]</scope>
    <source>
        <strain>cv. Nipponbare</strain>
    </source>
</reference>
<reference key="5">
    <citation type="journal article" date="2003" name="Science">
        <title>Collection, mapping, and annotation of over 28,000 cDNA clones from japonica rice.</title>
        <authorList>
            <consortium name="The rice full-length cDNA consortium"/>
        </authorList>
    </citation>
    <scope>NUCLEOTIDE SEQUENCE [LARGE SCALE MRNA]</scope>
    <source>
        <strain>cv. Nipponbare</strain>
    </source>
</reference>
<name>BOP1_ORYSJ</name>
<gene>
    <name evidence="3" type="primary">BOP1</name>
    <name evidence="5" type="ordered locus">Os07g0435400</name>
    <name evidence="3" type="ordered locus">LOC_Os07g25440</name>
    <name evidence="6" type="ORF">OsJ_24034</name>
</gene>
<organism evidence="4">
    <name type="scientific">Oryza sativa subsp. japonica</name>
    <name type="common">Rice</name>
    <dbReference type="NCBI Taxonomy" id="39947"/>
    <lineage>
        <taxon>Eukaryota</taxon>
        <taxon>Viridiplantae</taxon>
        <taxon>Streptophyta</taxon>
        <taxon>Embryophyta</taxon>
        <taxon>Tracheophyta</taxon>
        <taxon>Spermatophyta</taxon>
        <taxon>Magnoliopsida</taxon>
        <taxon>Liliopsida</taxon>
        <taxon>Poales</taxon>
        <taxon>Poaceae</taxon>
        <taxon>BOP clade</taxon>
        <taxon>Oryzoideae</taxon>
        <taxon>Oryzeae</taxon>
        <taxon>Oryzinae</taxon>
        <taxon>Oryza</taxon>
        <taxon>Oryza sativa</taxon>
    </lineage>
</organism>
<sequence length="678" mass="77222">MGHSDGDHGSDLSADDSPWSEGSWSDDDDEGSLSFEDSGEGSDAESDEPDAPAVEESDSSEDEVAPRNTIGDVPLEWYKNEEHIGYDITGSKIKKRDREGRIEAYLRNADDAKNWRKIYDEYNDEEVQITKEEAKIISRLLKGKTPHTNVDPYPDYVDWFEYDGKGHPLSSAPEPKRRFVPSRWEQKKVVKLVRAIRKGWIKFDKPKEEPNFYLLWGDETDTADNKRQGLSYIPAPKPNLPGHEESYNPSVEYIPTQEEIDSYQLMYEEDRPKFIPRKFDCLRSVPAYEKALREGFDRCLDLYLCPRTRKKRINIDPESLKPKLPSKKDLRPYPRTCYLEFKGHNGPVKSLSVEATGQWIASGSSDGTIRVWEVETGRCIKVWNVGGVVHRIAWNPSPDRHILAAVVDHDLLLLNAEVGDEDAQMKTKGLLQIEELAQEEDNGDKKPAVKWVKHEKFDGIMLIHHKAVSTVEWHFKGDYFTTVVPSGDSRAVLLHQLSKKHSHHPFRKLPGLPIAAVFHPSQKMFFVATKKFVQVYDLQKAQLVKKLESGVREISSISIHPGGDNVIVGSKDGKLCWFDTDLSTRPYKTLKNHSKDITNVTFHRKYPLFASSSEDCTAYVFHGMVYSDLNQNPLIVPLEILRGHSSSDGRGVLDCKFHPRQPWLFTAGADSVVRLYCD</sequence>
<dbReference type="EMBL" id="AP005200">
    <property type="protein sequence ID" value="BAC84089.1"/>
    <property type="status" value="ALT_SEQ"/>
    <property type="molecule type" value="Genomic_DNA"/>
</dbReference>
<dbReference type="EMBL" id="AP008213">
    <property type="protein sequence ID" value="BAF21416.1"/>
    <property type="molecule type" value="Genomic_DNA"/>
</dbReference>
<dbReference type="EMBL" id="AP014963">
    <property type="protein sequence ID" value="BAT01239.1"/>
    <property type="molecule type" value="Genomic_DNA"/>
</dbReference>
<dbReference type="EMBL" id="CM000144">
    <property type="protein sequence ID" value="EEE67069.1"/>
    <property type="molecule type" value="Genomic_DNA"/>
</dbReference>
<dbReference type="EMBL" id="AK111603">
    <property type="protein sequence ID" value="BAG99327.1"/>
    <property type="molecule type" value="mRNA"/>
</dbReference>
<dbReference type="RefSeq" id="XP_015647313.1">
    <property type="nucleotide sequence ID" value="XM_015791827.1"/>
</dbReference>
<dbReference type="SMR" id="Q0D6V7"/>
<dbReference type="FunCoup" id="Q0D6V7">
    <property type="interactions" value="1487"/>
</dbReference>
<dbReference type="STRING" id="39947.Q0D6V7"/>
<dbReference type="PaxDb" id="39947-Q0D6V7"/>
<dbReference type="EnsemblPlants" id="Os07t0435400-01">
    <property type="protein sequence ID" value="Os07t0435400-01"/>
    <property type="gene ID" value="Os07g0435400"/>
</dbReference>
<dbReference type="Gramene" id="Os07t0435400-01">
    <property type="protein sequence ID" value="Os07t0435400-01"/>
    <property type="gene ID" value="Os07g0435400"/>
</dbReference>
<dbReference type="KEGG" id="dosa:Os07g0435400"/>
<dbReference type="eggNOG" id="KOG0650">
    <property type="taxonomic scope" value="Eukaryota"/>
</dbReference>
<dbReference type="HOGENOM" id="CLU_011390_2_0_1"/>
<dbReference type="InParanoid" id="Q0D6V7"/>
<dbReference type="OMA" id="MRPAKGE"/>
<dbReference type="OrthoDB" id="5571054at2759"/>
<dbReference type="Proteomes" id="UP000000763">
    <property type="component" value="Chromosome 7"/>
</dbReference>
<dbReference type="Proteomes" id="UP000007752">
    <property type="component" value="Chromosome 7"/>
</dbReference>
<dbReference type="Proteomes" id="UP000059680">
    <property type="component" value="Chromosome 7"/>
</dbReference>
<dbReference type="GO" id="GO:0005654">
    <property type="term" value="C:nucleoplasm"/>
    <property type="evidence" value="ECO:0007669"/>
    <property type="project" value="UniProtKB-SubCell"/>
</dbReference>
<dbReference type="GO" id="GO:0070545">
    <property type="term" value="C:PeBoW complex"/>
    <property type="evidence" value="ECO:0000318"/>
    <property type="project" value="GO_Central"/>
</dbReference>
<dbReference type="GO" id="GO:0030687">
    <property type="term" value="C:preribosome, large subunit precursor"/>
    <property type="evidence" value="ECO:0000318"/>
    <property type="project" value="GO_Central"/>
</dbReference>
<dbReference type="GO" id="GO:0043021">
    <property type="term" value="F:ribonucleoprotein complex binding"/>
    <property type="evidence" value="ECO:0000318"/>
    <property type="project" value="GO_Central"/>
</dbReference>
<dbReference type="GO" id="GO:0000466">
    <property type="term" value="P:maturation of 5.8S rRNA from tricistronic rRNA transcript (SSU-rRNA, 5.8S rRNA, LSU-rRNA)"/>
    <property type="evidence" value="ECO:0007669"/>
    <property type="project" value="UniProtKB-UniRule"/>
</dbReference>
<dbReference type="GO" id="GO:0000463">
    <property type="term" value="P:maturation of LSU-rRNA from tricistronic rRNA transcript (SSU-rRNA, 5.8S rRNA, LSU-rRNA)"/>
    <property type="evidence" value="ECO:0000318"/>
    <property type="project" value="GO_Central"/>
</dbReference>
<dbReference type="FunFam" id="2.130.10.10:FF:000061">
    <property type="entry name" value="Ribosome biogenesis protein BOP1 homolog"/>
    <property type="match status" value="1"/>
</dbReference>
<dbReference type="Gene3D" id="2.130.10.10">
    <property type="entry name" value="YVTN repeat-like/Quinoprotein amine dehydrogenase"/>
    <property type="match status" value="1"/>
</dbReference>
<dbReference type="HAMAP" id="MF_03027">
    <property type="entry name" value="BOP1"/>
    <property type="match status" value="1"/>
</dbReference>
<dbReference type="InterPro" id="IPR028598">
    <property type="entry name" value="BOP1/Erb1"/>
</dbReference>
<dbReference type="InterPro" id="IPR012953">
    <property type="entry name" value="BOP1_N_dom"/>
</dbReference>
<dbReference type="InterPro" id="IPR015943">
    <property type="entry name" value="WD40/YVTN_repeat-like_dom_sf"/>
</dbReference>
<dbReference type="InterPro" id="IPR019775">
    <property type="entry name" value="WD40_repeat_CS"/>
</dbReference>
<dbReference type="InterPro" id="IPR036322">
    <property type="entry name" value="WD40_repeat_dom_sf"/>
</dbReference>
<dbReference type="InterPro" id="IPR001680">
    <property type="entry name" value="WD40_rpt"/>
</dbReference>
<dbReference type="PANTHER" id="PTHR17605:SF0">
    <property type="entry name" value="RIBOSOME BIOGENESIS PROTEIN BOP1"/>
    <property type="match status" value="1"/>
</dbReference>
<dbReference type="PANTHER" id="PTHR17605">
    <property type="entry name" value="RIBOSOME BIOGENESIS PROTEIN BOP1 BLOCK OF PROLIFERATION 1 PROTEIN"/>
    <property type="match status" value="1"/>
</dbReference>
<dbReference type="Pfam" id="PF08145">
    <property type="entry name" value="BOP1NT"/>
    <property type="match status" value="1"/>
</dbReference>
<dbReference type="Pfam" id="PF00400">
    <property type="entry name" value="WD40"/>
    <property type="match status" value="4"/>
</dbReference>
<dbReference type="SMART" id="SM01035">
    <property type="entry name" value="BOP1NT"/>
    <property type="match status" value="1"/>
</dbReference>
<dbReference type="SMART" id="SM00320">
    <property type="entry name" value="WD40"/>
    <property type="match status" value="5"/>
</dbReference>
<dbReference type="SUPFAM" id="SSF50978">
    <property type="entry name" value="WD40 repeat-like"/>
    <property type="match status" value="1"/>
</dbReference>
<dbReference type="PROSITE" id="PS00678">
    <property type="entry name" value="WD_REPEATS_1"/>
    <property type="match status" value="1"/>
</dbReference>
<dbReference type="PROSITE" id="PS50082">
    <property type="entry name" value="WD_REPEATS_2"/>
    <property type="match status" value="1"/>
</dbReference>
<dbReference type="PROSITE" id="PS50294">
    <property type="entry name" value="WD_REPEATS_REGION"/>
    <property type="match status" value="2"/>
</dbReference>
<feature type="chain" id="PRO_0000437495" description="Ribosome biogenesis protein BOP1 homolog">
    <location>
        <begin position="1"/>
        <end position="678"/>
    </location>
</feature>
<feature type="repeat" description="WD 1" evidence="1">
    <location>
        <begin position="343"/>
        <end position="384"/>
    </location>
</feature>
<feature type="repeat" description="WD 2" evidence="1">
    <location>
        <begin position="386"/>
        <end position="424"/>
    </location>
</feature>
<feature type="repeat" description="WD 3" evidence="1">
    <location>
        <begin position="463"/>
        <end position="505"/>
    </location>
</feature>
<feature type="repeat" description="WD 4" evidence="1">
    <location>
        <begin position="508"/>
        <end position="548"/>
    </location>
</feature>
<feature type="repeat" description="WD 5" evidence="1">
    <location>
        <begin position="549"/>
        <end position="588"/>
    </location>
</feature>
<feature type="repeat" description="WD 6" evidence="1">
    <location>
        <begin position="592"/>
        <end position="631"/>
    </location>
</feature>
<feature type="repeat" description="WD 7" evidence="1">
    <location>
        <begin position="647"/>
        <end position="678"/>
    </location>
</feature>
<feature type="region of interest" description="Disordered" evidence="2">
    <location>
        <begin position="1"/>
        <end position="73"/>
    </location>
</feature>
<feature type="compositionally biased region" description="Basic and acidic residues" evidence="2">
    <location>
        <begin position="1"/>
        <end position="10"/>
    </location>
</feature>
<feature type="compositionally biased region" description="Acidic residues" evidence="2">
    <location>
        <begin position="24"/>
        <end position="63"/>
    </location>
</feature>
<proteinExistence type="evidence at transcript level"/>
<evidence type="ECO:0000255" key="1">
    <source>
        <dbReference type="HAMAP-Rule" id="MF_03027"/>
    </source>
</evidence>
<evidence type="ECO:0000256" key="2">
    <source>
        <dbReference type="SAM" id="MobiDB-lite"/>
    </source>
</evidence>
<evidence type="ECO:0000305" key="3"/>
<evidence type="ECO:0000312" key="4">
    <source>
        <dbReference type="EMBL" id="BAF21416.1"/>
    </source>
</evidence>
<evidence type="ECO:0000312" key="5">
    <source>
        <dbReference type="EMBL" id="BAT01239.1"/>
    </source>
</evidence>
<evidence type="ECO:0000312" key="6">
    <source>
        <dbReference type="EMBL" id="EEE67069.1"/>
    </source>
</evidence>
<accession>Q0D6V7</accession>
<accession>Q6Z3V6</accession>
<protein>
    <recommendedName>
        <fullName evidence="1">Ribosome biogenesis protein BOP1 homolog</fullName>
    </recommendedName>
</protein>